<feature type="chain" id="PRO_0000281811" description="Histone-lysine N-methyltransferase SUV39H1-A">
    <location>
        <begin position="1"/>
        <end position="411"/>
    </location>
</feature>
<feature type="domain" description="Chromo" evidence="2">
    <location>
        <begin position="43"/>
        <end position="101"/>
    </location>
</feature>
<feature type="domain" description="Pre-SET" evidence="4">
    <location>
        <begin position="178"/>
        <end position="239"/>
    </location>
</feature>
<feature type="domain" description="SET" evidence="5">
    <location>
        <begin position="242"/>
        <end position="365"/>
    </location>
</feature>
<feature type="domain" description="Post-SET" evidence="3">
    <location>
        <begin position="395"/>
        <end position="411"/>
    </location>
</feature>
<feature type="binding site" evidence="1">
    <location>
        <position position="180"/>
    </location>
    <ligand>
        <name>Zn(2+)</name>
        <dbReference type="ChEBI" id="CHEBI:29105"/>
        <label>1</label>
    </ligand>
</feature>
<feature type="binding site" evidence="1">
    <location>
        <position position="180"/>
    </location>
    <ligand>
        <name>Zn(2+)</name>
        <dbReference type="ChEBI" id="CHEBI:29105"/>
        <label>2</label>
    </ligand>
</feature>
<feature type="binding site" evidence="1">
    <location>
        <position position="182"/>
    </location>
    <ligand>
        <name>Zn(2+)</name>
        <dbReference type="ChEBI" id="CHEBI:29105"/>
        <label>1</label>
    </ligand>
</feature>
<feature type="binding site" evidence="1">
    <location>
        <position position="185"/>
    </location>
    <ligand>
        <name>Zn(2+)</name>
        <dbReference type="ChEBI" id="CHEBI:29105"/>
        <label>1</label>
    </ligand>
</feature>
<feature type="binding site" evidence="1">
    <location>
        <position position="185"/>
    </location>
    <ligand>
        <name>Zn(2+)</name>
        <dbReference type="ChEBI" id="CHEBI:29105"/>
        <label>3</label>
    </ligand>
</feature>
<feature type="binding site" evidence="1">
    <location>
        <position position="193"/>
    </location>
    <ligand>
        <name>Zn(2+)</name>
        <dbReference type="ChEBI" id="CHEBI:29105"/>
        <label>1</label>
    </ligand>
</feature>
<feature type="binding site" evidence="1">
    <location>
        <position position="194"/>
    </location>
    <ligand>
        <name>Zn(2+)</name>
        <dbReference type="ChEBI" id="CHEBI:29105"/>
        <label>1</label>
    </ligand>
</feature>
<feature type="binding site" evidence="1">
    <location>
        <position position="194"/>
    </location>
    <ligand>
        <name>Zn(2+)</name>
        <dbReference type="ChEBI" id="CHEBI:29105"/>
        <label>2</label>
    </ligand>
</feature>
<feature type="binding site" evidence="1">
    <location>
        <position position="221"/>
    </location>
    <ligand>
        <name>Zn(2+)</name>
        <dbReference type="ChEBI" id="CHEBI:29105"/>
        <label>2</label>
    </ligand>
</feature>
<feature type="binding site" evidence="1">
    <location>
        <position position="221"/>
    </location>
    <ligand>
        <name>Zn(2+)</name>
        <dbReference type="ChEBI" id="CHEBI:29105"/>
        <label>3</label>
    </ligand>
</feature>
<feature type="binding site" evidence="1">
    <location>
        <position position="225"/>
    </location>
    <ligand>
        <name>Zn(2+)</name>
        <dbReference type="ChEBI" id="CHEBI:29105"/>
        <label>2</label>
    </ligand>
</feature>
<feature type="binding site" evidence="1">
    <location>
        <position position="227"/>
    </location>
    <ligand>
        <name>Zn(2+)</name>
        <dbReference type="ChEBI" id="CHEBI:29105"/>
        <label>3</label>
    </ligand>
</feature>
<feature type="binding site" evidence="1">
    <location>
        <position position="231"/>
    </location>
    <ligand>
        <name>Zn(2+)</name>
        <dbReference type="ChEBI" id="CHEBI:29105"/>
        <label>3</label>
    </ligand>
</feature>
<feature type="binding site" evidence="1">
    <location>
        <begin position="253"/>
        <end position="255"/>
    </location>
    <ligand>
        <name>S-adenosyl-L-methionine</name>
        <dbReference type="ChEBI" id="CHEBI:59789"/>
    </ligand>
</feature>
<feature type="binding site" evidence="5">
    <location>
        <position position="296"/>
    </location>
    <ligand>
        <name>S-adenosyl-L-methionine</name>
        <dbReference type="ChEBI" id="CHEBI:59789"/>
    </ligand>
</feature>
<feature type="binding site" evidence="1">
    <location>
        <begin position="322"/>
        <end position="323"/>
    </location>
    <ligand>
        <name>S-adenosyl-L-methionine</name>
        <dbReference type="ChEBI" id="CHEBI:59789"/>
    </ligand>
</feature>
<feature type="binding site" evidence="1">
    <location>
        <position position="325"/>
    </location>
    <ligand>
        <name>Zn(2+)</name>
        <dbReference type="ChEBI" id="CHEBI:29105"/>
        <label>4</label>
    </ligand>
</feature>
<feature type="binding site" evidence="1">
    <location>
        <position position="399"/>
    </location>
    <ligand>
        <name>Zn(2+)</name>
        <dbReference type="ChEBI" id="CHEBI:29105"/>
        <label>4</label>
    </ligand>
</feature>
<feature type="binding site" evidence="1">
    <location>
        <position position="401"/>
    </location>
    <ligand>
        <name>Zn(2+)</name>
        <dbReference type="ChEBI" id="CHEBI:29105"/>
        <label>4</label>
    </ligand>
</feature>
<feature type="binding site" evidence="1">
    <location>
        <position position="406"/>
    </location>
    <ligand>
        <name>Zn(2+)</name>
        <dbReference type="ChEBI" id="CHEBI:29105"/>
        <label>4</label>
    </ligand>
</feature>
<feature type="sequence conflict" description="In Ref. 2; AAH76417." evidence="10" ref="2">
    <original>W</original>
    <variation>R</variation>
    <location>
        <position position="139"/>
    </location>
</feature>
<feature type="sequence conflict" description="In Ref. 2; AAH76417." evidence="10" ref="2">
    <original>M</original>
    <variation>L</variation>
    <location>
        <position position="152"/>
    </location>
</feature>
<feature type="sequence conflict" description="In Ref. 2; AAH76417." evidence="10" ref="2">
    <original>E</original>
    <variation>A</variation>
    <location>
        <position position="183"/>
    </location>
</feature>
<feature type="sequence conflict" description="In Ref. 2; AAH76417." evidence="10" ref="2">
    <original>Q</original>
    <variation>R</variation>
    <location>
        <position position="284"/>
    </location>
</feature>
<proteinExistence type="evidence at transcript level"/>
<evidence type="ECO:0000250" key="1"/>
<evidence type="ECO:0000255" key="2">
    <source>
        <dbReference type="PROSITE-ProRule" id="PRU00053"/>
    </source>
</evidence>
<evidence type="ECO:0000255" key="3">
    <source>
        <dbReference type="PROSITE-ProRule" id="PRU00155"/>
    </source>
</evidence>
<evidence type="ECO:0000255" key="4">
    <source>
        <dbReference type="PROSITE-ProRule" id="PRU00157"/>
    </source>
</evidence>
<evidence type="ECO:0000255" key="5">
    <source>
        <dbReference type="PROSITE-ProRule" id="PRU00190"/>
    </source>
</evidence>
<evidence type="ECO:0000255" key="6">
    <source>
        <dbReference type="PROSITE-ProRule" id="PRU00912"/>
    </source>
</evidence>
<evidence type="ECO:0000255" key="7">
    <source>
        <dbReference type="PROSITE-ProRule" id="PRU00913"/>
    </source>
</evidence>
<evidence type="ECO:0000269" key="8">
    <source>
    </source>
</evidence>
<evidence type="ECO:0000269" key="9">
    <source>
    </source>
</evidence>
<evidence type="ECO:0000305" key="10"/>
<evidence type="ECO:0000305" key="11">
    <source>
    </source>
</evidence>
<dbReference type="EC" id="2.1.1.-" evidence="11"/>
<dbReference type="EC" id="2.1.1.366" evidence="11"/>
<dbReference type="EMBL" id="BX005340">
    <property type="protein sequence ID" value="CAQ14784.1"/>
    <property type="molecule type" value="Genomic_DNA"/>
</dbReference>
<dbReference type="EMBL" id="BC076417">
    <property type="protein sequence ID" value="AAH76417.1"/>
    <property type="molecule type" value="mRNA"/>
</dbReference>
<dbReference type="EMBL" id="DQ840140">
    <property type="protein sequence ID" value="ABI34869.1"/>
    <property type="molecule type" value="mRNA"/>
</dbReference>
<dbReference type="RefSeq" id="NP_001003592.1">
    <property type="nucleotide sequence ID" value="NM_001003592.1"/>
</dbReference>
<dbReference type="SMR" id="Q6DGD3"/>
<dbReference type="FunCoup" id="Q6DGD3">
    <property type="interactions" value="4"/>
</dbReference>
<dbReference type="STRING" id="7955.ENSDARP00000034818"/>
<dbReference type="PaxDb" id="7955-ENSDARP00000034818"/>
<dbReference type="Ensembl" id="ENSDART00000038955">
    <property type="protein sequence ID" value="ENSDARP00000034818"/>
    <property type="gene ID" value="ENSDARG00000026799"/>
</dbReference>
<dbReference type="GeneID" id="445198"/>
<dbReference type="KEGG" id="dre:445198"/>
<dbReference type="AGR" id="ZFIN:ZDB-GENE-040801-111"/>
<dbReference type="CTD" id="445198"/>
<dbReference type="ZFIN" id="ZDB-GENE-040801-111">
    <property type="gene designation" value="suv39h1a"/>
</dbReference>
<dbReference type="eggNOG" id="KOG1082">
    <property type="taxonomic scope" value="Eukaryota"/>
</dbReference>
<dbReference type="HOGENOM" id="CLU_020840_8_0_1"/>
<dbReference type="InParanoid" id="Q6DGD3"/>
<dbReference type="OMA" id="YESNEFT"/>
<dbReference type="OrthoDB" id="308383at2759"/>
<dbReference type="PhylomeDB" id="Q6DGD3"/>
<dbReference type="TreeFam" id="TF106452"/>
<dbReference type="PRO" id="PR:Q6DGD3"/>
<dbReference type="Proteomes" id="UP000000437">
    <property type="component" value="Chromosome 8"/>
</dbReference>
<dbReference type="Bgee" id="ENSDARG00000026799">
    <property type="expression patterns" value="Expressed in mature ovarian follicle and 18 other cell types or tissues"/>
</dbReference>
<dbReference type="GO" id="GO:0000775">
    <property type="term" value="C:chromosome, centromeric region"/>
    <property type="evidence" value="ECO:0007669"/>
    <property type="project" value="UniProtKB-SubCell"/>
</dbReference>
<dbReference type="GO" id="GO:0005634">
    <property type="term" value="C:nucleus"/>
    <property type="evidence" value="ECO:0000318"/>
    <property type="project" value="GO_Central"/>
</dbReference>
<dbReference type="GO" id="GO:0046974">
    <property type="term" value="F:histone H3K9 methyltransferase activity"/>
    <property type="evidence" value="ECO:0000315"/>
    <property type="project" value="ZFIN"/>
</dbReference>
<dbReference type="GO" id="GO:0140948">
    <property type="term" value="F:histone H3K9 monomethyltransferase activity"/>
    <property type="evidence" value="ECO:0007669"/>
    <property type="project" value="RHEA"/>
</dbReference>
<dbReference type="GO" id="GO:0008270">
    <property type="term" value="F:zinc ion binding"/>
    <property type="evidence" value="ECO:0007669"/>
    <property type="project" value="InterPro"/>
</dbReference>
<dbReference type="GO" id="GO:0030154">
    <property type="term" value="P:cell differentiation"/>
    <property type="evidence" value="ECO:0007669"/>
    <property type="project" value="UniProtKB-KW"/>
</dbReference>
<dbReference type="GO" id="GO:0031017">
    <property type="term" value="P:exocrine pancreas development"/>
    <property type="evidence" value="ECO:0000315"/>
    <property type="project" value="ZFIN"/>
</dbReference>
<dbReference type="GO" id="GO:0032259">
    <property type="term" value="P:methylation"/>
    <property type="evidence" value="ECO:0007669"/>
    <property type="project" value="UniProtKB-KW"/>
</dbReference>
<dbReference type="GO" id="GO:0060042">
    <property type="term" value="P:retina morphogenesis in camera-type eye"/>
    <property type="evidence" value="ECO:0000315"/>
    <property type="project" value="ZFIN"/>
</dbReference>
<dbReference type="CDD" id="cd18639">
    <property type="entry name" value="CD_SUV39H1_like"/>
    <property type="match status" value="1"/>
</dbReference>
<dbReference type="FunFam" id="2.170.270.10:FF:000008">
    <property type="entry name" value="Histone-lysine N-methyltransferase"/>
    <property type="match status" value="1"/>
</dbReference>
<dbReference type="Gene3D" id="2.40.50.40">
    <property type="match status" value="1"/>
</dbReference>
<dbReference type="Gene3D" id="2.170.270.10">
    <property type="entry name" value="SET domain"/>
    <property type="match status" value="1"/>
</dbReference>
<dbReference type="InterPro" id="IPR016197">
    <property type="entry name" value="Chromo-like_dom_sf"/>
</dbReference>
<dbReference type="InterPro" id="IPR000953">
    <property type="entry name" value="Chromo/chromo_shadow_dom"/>
</dbReference>
<dbReference type="InterPro" id="IPR023780">
    <property type="entry name" value="Chromo_domain"/>
</dbReference>
<dbReference type="InterPro" id="IPR023779">
    <property type="entry name" value="Chromodomain_CS"/>
</dbReference>
<dbReference type="InterPro" id="IPR011381">
    <property type="entry name" value="H3-K9_MeTrfase_SUV39H1/2-like"/>
</dbReference>
<dbReference type="InterPro" id="IPR050973">
    <property type="entry name" value="H3K9_Histone-Lys_N-MTase"/>
</dbReference>
<dbReference type="InterPro" id="IPR003616">
    <property type="entry name" value="Post-SET_dom"/>
</dbReference>
<dbReference type="InterPro" id="IPR007728">
    <property type="entry name" value="Pre-SET_dom"/>
</dbReference>
<dbReference type="InterPro" id="IPR001214">
    <property type="entry name" value="SET_dom"/>
</dbReference>
<dbReference type="InterPro" id="IPR046341">
    <property type="entry name" value="SET_dom_sf"/>
</dbReference>
<dbReference type="PANTHER" id="PTHR46223">
    <property type="entry name" value="HISTONE-LYSINE N-METHYLTRANSFERASE SUV39H"/>
    <property type="match status" value="1"/>
</dbReference>
<dbReference type="PANTHER" id="PTHR46223:SF4">
    <property type="entry name" value="HISTONE-LYSINE N-METHYLTRANSFERASE-RELATED"/>
    <property type="match status" value="1"/>
</dbReference>
<dbReference type="Pfam" id="PF00385">
    <property type="entry name" value="Chromo"/>
    <property type="match status" value="1"/>
</dbReference>
<dbReference type="Pfam" id="PF05033">
    <property type="entry name" value="Pre-SET"/>
    <property type="match status" value="1"/>
</dbReference>
<dbReference type="Pfam" id="PF00856">
    <property type="entry name" value="SET"/>
    <property type="match status" value="1"/>
</dbReference>
<dbReference type="PIRSF" id="PIRSF009343">
    <property type="entry name" value="SUV39_SET"/>
    <property type="match status" value="1"/>
</dbReference>
<dbReference type="SMART" id="SM00298">
    <property type="entry name" value="CHROMO"/>
    <property type="match status" value="1"/>
</dbReference>
<dbReference type="SMART" id="SM00468">
    <property type="entry name" value="PreSET"/>
    <property type="match status" value="1"/>
</dbReference>
<dbReference type="SMART" id="SM00317">
    <property type="entry name" value="SET"/>
    <property type="match status" value="1"/>
</dbReference>
<dbReference type="SUPFAM" id="SSF54160">
    <property type="entry name" value="Chromo domain-like"/>
    <property type="match status" value="1"/>
</dbReference>
<dbReference type="SUPFAM" id="SSF82199">
    <property type="entry name" value="SET domain"/>
    <property type="match status" value="1"/>
</dbReference>
<dbReference type="PROSITE" id="PS00598">
    <property type="entry name" value="CHROMO_1"/>
    <property type="match status" value="1"/>
</dbReference>
<dbReference type="PROSITE" id="PS50013">
    <property type="entry name" value="CHROMO_2"/>
    <property type="match status" value="1"/>
</dbReference>
<dbReference type="PROSITE" id="PS50868">
    <property type="entry name" value="POST_SET"/>
    <property type="match status" value="1"/>
</dbReference>
<dbReference type="PROSITE" id="PS50867">
    <property type="entry name" value="PRE_SET"/>
    <property type="match status" value="1"/>
</dbReference>
<dbReference type="PROSITE" id="PS51579">
    <property type="entry name" value="SAM_MT43_SUVAR39_3"/>
    <property type="match status" value="1"/>
</dbReference>
<dbReference type="PROSITE" id="PS50280">
    <property type="entry name" value="SET"/>
    <property type="match status" value="1"/>
</dbReference>
<keyword id="KW-0131">Cell cycle</keyword>
<keyword id="KW-0137">Centromere</keyword>
<keyword id="KW-0156">Chromatin regulator</keyword>
<keyword id="KW-0158">Chromosome</keyword>
<keyword id="KW-0221">Differentiation</keyword>
<keyword id="KW-0479">Metal-binding</keyword>
<keyword id="KW-0489">Methyltransferase</keyword>
<keyword id="KW-0539">Nucleus</keyword>
<keyword id="KW-1185">Reference proteome</keyword>
<keyword id="KW-0678">Repressor</keyword>
<keyword id="KW-0949">S-adenosyl-L-methionine</keyword>
<keyword id="KW-0804">Transcription</keyword>
<keyword id="KW-0805">Transcription regulation</keyword>
<keyword id="KW-0808">Transferase</keyword>
<keyword id="KW-0862">Zinc</keyword>
<name>SV91A_DANRE</name>
<sequence>MARDLKDCRVPCKLLLEDLQALCRRKKLVCKQLSVTKNNFNDYEVEYLCNYKKHKGREFFLVKWKGYEESENTWEPLKNLKCPILLHQFRKDMKAALLQANEPLDSASLSGPIISFLRQKATQRIRLKKWEDLMNQTCWHKGRIFVSNEVDMDGPPKNFTYINENKLGKGVDMNAVIVGCECEDCVSQPVDGCCPGLLKFRRAYNESRRVKVMPGVPIYECNSKCRCGPDCANRVVQRGIQYDLCIFKTDNGRGWGVRTLQRINKNSFVMEYLGEIITTDEAEQRGVLYDKQGVTYLFDLDYVDDVYTIDAAHYGNISHFVNHSCDPNLQVYNVFIDNLDERLPRIALFAKRGIKAGEELTFDYKMTVDPVDAESTKMDLDFSRAGIEGSPIKRVHMECKCGVRNCRKYLF</sequence>
<gene>
    <name type="primary">suv39h1a</name>
    <name type="synonym">suv39h1</name>
    <name type="ORF">si:dkey-16n15.2</name>
    <name type="ORF">zgc:101027</name>
</gene>
<reference key="1">
    <citation type="journal article" date="2013" name="Nature">
        <title>The zebrafish reference genome sequence and its relationship to the human genome.</title>
        <authorList>
            <person name="Howe K."/>
            <person name="Clark M.D."/>
            <person name="Torroja C.F."/>
            <person name="Torrance J."/>
            <person name="Berthelot C."/>
            <person name="Muffato M."/>
            <person name="Collins J.E."/>
            <person name="Humphray S."/>
            <person name="McLaren K."/>
            <person name="Matthews L."/>
            <person name="McLaren S."/>
            <person name="Sealy I."/>
            <person name="Caccamo M."/>
            <person name="Churcher C."/>
            <person name="Scott C."/>
            <person name="Barrett J.C."/>
            <person name="Koch R."/>
            <person name="Rauch G.J."/>
            <person name="White S."/>
            <person name="Chow W."/>
            <person name="Kilian B."/>
            <person name="Quintais L.T."/>
            <person name="Guerra-Assuncao J.A."/>
            <person name="Zhou Y."/>
            <person name="Gu Y."/>
            <person name="Yen J."/>
            <person name="Vogel J.H."/>
            <person name="Eyre T."/>
            <person name="Redmond S."/>
            <person name="Banerjee R."/>
            <person name="Chi J."/>
            <person name="Fu B."/>
            <person name="Langley E."/>
            <person name="Maguire S.F."/>
            <person name="Laird G.K."/>
            <person name="Lloyd D."/>
            <person name="Kenyon E."/>
            <person name="Donaldson S."/>
            <person name="Sehra H."/>
            <person name="Almeida-King J."/>
            <person name="Loveland J."/>
            <person name="Trevanion S."/>
            <person name="Jones M."/>
            <person name="Quail M."/>
            <person name="Willey D."/>
            <person name="Hunt A."/>
            <person name="Burton J."/>
            <person name="Sims S."/>
            <person name="McLay K."/>
            <person name="Plumb B."/>
            <person name="Davis J."/>
            <person name="Clee C."/>
            <person name="Oliver K."/>
            <person name="Clark R."/>
            <person name="Riddle C."/>
            <person name="Elliot D."/>
            <person name="Threadgold G."/>
            <person name="Harden G."/>
            <person name="Ware D."/>
            <person name="Begum S."/>
            <person name="Mortimore B."/>
            <person name="Kerry G."/>
            <person name="Heath P."/>
            <person name="Phillimore B."/>
            <person name="Tracey A."/>
            <person name="Corby N."/>
            <person name="Dunn M."/>
            <person name="Johnson C."/>
            <person name="Wood J."/>
            <person name="Clark S."/>
            <person name="Pelan S."/>
            <person name="Griffiths G."/>
            <person name="Smith M."/>
            <person name="Glithero R."/>
            <person name="Howden P."/>
            <person name="Barker N."/>
            <person name="Lloyd C."/>
            <person name="Stevens C."/>
            <person name="Harley J."/>
            <person name="Holt K."/>
            <person name="Panagiotidis G."/>
            <person name="Lovell J."/>
            <person name="Beasley H."/>
            <person name="Henderson C."/>
            <person name="Gordon D."/>
            <person name="Auger K."/>
            <person name="Wright D."/>
            <person name="Collins J."/>
            <person name="Raisen C."/>
            <person name="Dyer L."/>
            <person name="Leung K."/>
            <person name="Robertson L."/>
            <person name="Ambridge K."/>
            <person name="Leongamornlert D."/>
            <person name="McGuire S."/>
            <person name="Gilderthorp R."/>
            <person name="Griffiths C."/>
            <person name="Manthravadi D."/>
            <person name="Nichol S."/>
            <person name="Barker G."/>
            <person name="Whitehead S."/>
            <person name="Kay M."/>
            <person name="Brown J."/>
            <person name="Murnane C."/>
            <person name="Gray E."/>
            <person name="Humphries M."/>
            <person name="Sycamore N."/>
            <person name="Barker D."/>
            <person name="Saunders D."/>
            <person name="Wallis J."/>
            <person name="Babbage A."/>
            <person name="Hammond S."/>
            <person name="Mashreghi-Mohammadi M."/>
            <person name="Barr L."/>
            <person name="Martin S."/>
            <person name="Wray P."/>
            <person name="Ellington A."/>
            <person name="Matthews N."/>
            <person name="Ellwood M."/>
            <person name="Woodmansey R."/>
            <person name="Clark G."/>
            <person name="Cooper J."/>
            <person name="Tromans A."/>
            <person name="Grafham D."/>
            <person name="Skuce C."/>
            <person name="Pandian R."/>
            <person name="Andrews R."/>
            <person name="Harrison E."/>
            <person name="Kimberley A."/>
            <person name="Garnett J."/>
            <person name="Fosker N."/>
            <person name="Hall R."/>
            <person name="Garner P."/>
            <person name="Kelly D."/>
            <person name="Bird C."/>
            <person name="Palmer S."/>
            <person name="Gehring I."/>
            <person name="Berger A."/>
            <person name="Dooley C.M."/>
            <person name="Ersan-Urun Z."/>
            <person name="Eser C."/>
            <person name="Geiger H."/>
            <person name="Geisler M."/>
            <person name="Karotki L."/>
            <person name="Kirn A."/>
            <person name="Konantz J."/>
            <person name="Konantz M."/>
            <person name="Oberlander M."/>
            <person name="Rudolph-Geiger S."/>
            <person name="Teucke M."/>
            <person name="Lanz C."/>
            <person name="Raddatz G."/>
            <person name="Osoegawa K."/>
            <person name="Zhu B."/>
            <person name="Rapp A."/>
            <person name="Widaa S."/>
            <person name="Langford C."/>
            <person name="Yang F."/>
            <person name="Schuster S.C."/>
            <person name="Carter N.P."/>
            <person name="Harrow J."/>
            <person name="Ning Z."/>
            <person name="Herrero J."/>
            <person name="Searle S.M."/>
            <person name="Enright A."/>
            <person name="Geisler R."/>
            <person name="Plasterk R.H."/>
            <person name="Lee C."/>
            <person name="Westerfield M."/>
            <person name="de Jong P.J."/>
            <person name="Zon L.I."/>
            <person name="Postlethwait J.H."/>
            <person name="Nusslein-Volhard C."/>
            <person name="Hubbard T.J."/>
            <person name="Roest Crollius H."/>
            <person name="Rogers J."/>
            <person name="Stemple D.L."/>
        </authorList>
    </citation>
    <scope>NUCLEOTIDE SEQUENCE [LARGE SCALE GENOMIC DNA]</scope>
    <source>
        <strain>Tuebingen</strain>
    </source>
</reference>
<reference key="2">
    <citation type="submission" date="2004-07" db="EMBL/GenBank/DDBJ databases">
        <authorList>
            <consortium name="NIH - Zebrafish Gene Collection (ZGC) project"/>
        </authorList>
    </citation>
    <scope>NUCLEOTIDE SEQUENCE [LARGE SCALE MRNA]</scope>
    <source>
        <tissue>Embryo</tissue>
    </source>
</reference>
<reference key="3">
    <citation type="journal article" date="2008" name="PLoS ONE">
        <title>Genome-wide survey and developmental expression mapping of zebrafish SET domain-containing genes.</title>
        <authorList>
            <person name="Sun X.-J."/>
            <person name="Xu P.-F."/>
            <person name="Zhou T."/>
            <person name="Hu M."/>
            <person name="Fu C.-T."/>
            <person name="Zhang Y."/>
            <person name="Jin Y."/>
            <person name="Chen Y."/>
            <person name="Chen S.-J."/>
            <person name="Huang Q.-H."/>
            <person name="Liu T.X."/>
            <person name="Chen Z."/>
        </authorList>
    </citation>
    <scope>NUCLEOTIDE SEQUENCE [MRNA] OF 214-409</scope>
    <scope>TISSUE SPECIFICITY</scope>
    <scope>DEVELOPMENTAL STAGE</scope>
</reference>
<reference key="4">
    <citation type="journal article" date="2006" name="Mol. Cell. Biol.">
        <title>Zebra fish Dnmt1 and Suv39h1 regulate organ-specific terminal differentiation during development.</title>
        <authorList>
            <person name="Rai K."/>
            <person name="Nadauld L.D."/>
            <person name="Chidester S."/>
            <person name="Manos E.J."/>
            <person name="James S.R."/>
            <person name="Karpf A.R."/>
            <person name="Cairns B.R."/>
            <person name="Jones D.A."/>
        </authorList>
    </citation>
    <scope>FUNCTION</scope>
</reference>
<protein>
    <recommendedName>
        <fullName>Histone-lysine N-methyltransferase SUV39H1-A</fullName>
        <ecNumber evidence="11">2.1.1.-</ecNumber>
        <ecNumber evidence="11">2.1.1.366</ecNumber>
    </recommendedName>
    <alternativeName>
        <fullName>Suppressor of variegation 3-9 homolog 1-A</fullName>
        <shortName>Su(var)3-9 homolog 1-A</shortName>
    </alternativeName>
</protein>
<organism>
    <name type="scientific">Danio rerio</name>
    <name type="common">Zebrafish</name>
    <name type="synonym">Brachydanio rerio</name>
    <dbReference type="NCBI Taxonomy" id="7955"/>
    <lineage>
        <taxon>Eukaryota</taxon>
        <taxon>Metazoa</taxon>
        <taxon>Chordata</taxon>
        <taxon>Craniata</taxon>
        <taxon>Vertebrata</taxon>
        <taxon>Euteleostomi</taxon>
        <taxon>Actinopterygii</taxon>
        <taxon>Neopterygii</taxon>
        <taxon>Teleostei</taxon>
        <taxon>Ostariophysi</taxon>
        <taxon>Cypriniformes</taxon>
        <taxon>Danionidae</taxon>
        <taxon>Danioninae</taxon>
        <taxon>Danio</taxon>
    </lineage>
</organism>
<comment type="function">
    <text evidence="8">Histone methyltransferase that specifically trimethylates 'Lys-9' of histone H3 using monomethylated H3 'Lys-9' as substrate. H3 'Lys-9' trimethylation represents a specific tag for epigenetic transcriptional repression by recruiting HP1 (CBX1, CBX3 and/or CBX5) proteins to methylated histones. Mainly functions in heterochromatin regions, thereby playing a central role in the establishment of constitutive heterochromatin at pericentric and telomere regions. H3 'Lys-9' trimethylation is also required to direct DNA methylation at pericentric repeats. SUV39H1 is targeted to histone H3 via its interaction with RB1 and is involved in many processes, such as regulation of organ-specific terminal differentiation during development.</text>
</comment>
<comment type="catalytic activity">
    <reaction evidence="7 11">
        <text>N(6)-methyl-L-lysyl(9)-[histone H3] + S-adenosyl-L-methionine = N(6),N(6)-dimethyl-L-lysyl(9)-[histone H3] + S-adenosyl-L-homocysteine + H(+)</text>
        <dbReference type="Rhea" id="RHEA:60284"/>
        <dbReference type="Rhea" id="RHEA-COMP:15541"/>
        <dbReference type="Rhea" id="RHEA-COMP:15542"/>
        <dbReference type="ChEBI" id="CHEBI:15378"/>
        <dbReference type="ChEBI" id="CHEBI:57856"/>
        <dbReference type="ChEBI" id="CHEBI:59789"/>
        <dbReference type="ChEBI" id="CHEBI:61929"/>
        <dbReference type="ChEBI" id="CHEBI:61976"/>
    </reaction>
</comment>
<comment type="catalytic activity">
    <reaction evidence="7 11">
        <text>N(6),N(6)-dimethyl-L-lysyl(9)-[histone H3] + S-adenosyl-L-methionine = N(6),N(6),N(6)-trimethyl-L-lysyl(9)-[histone H3] + S-adenosyl-L-homocysteine + H(+)</text>
        <dbReference type="Rhea" id="RHEA:60288"/>
        <dbReference type="Rhea" id="RHEA-COMP:15538"/>
        <dbReference type="Rhea" id="RHEA-COMP:15541"/>
        <dbReference type="ChEBI" id="CHEBI:15378"/>
        <dbReference type="ChEBI" id="CHEBI:57856"/>
        <dbReference type="ChEBI" id="CHEBI:59789"/>
        <dbReference type="ChEBI" id="CHEBI:61961"/>
        <dbReference type="ChEBI" id="CHEBI:61976"/>
        <dbReference type="EC" id="2.1.1.366"/>
    </reaction>
</comment>
<comment type="subcellular location">
    <subcellularLocation>
        <location evidence="1">Nucleus</location>
    </subcellularLocation>
    <subcellularLocation>
        <location evidence="1">Chromosome</location>
        <location evidence="1">Centromere</location>
    </subcellularLocation>
    <text evidence="1">Associates with centromeric constitutive heterochromatin.</text>
</comment>
<comment type="tissue specificity">
    <text evidence="9">Expressed ubuitiously.</text>
</comment>
<comment type="developmental stage">
    <text evidence="9">Expressed both maternally and zygotically.</text>
</comment>
<comment type="domain">
    <text evidence="1">Although the SET domain contains the active site of enzymatic activity, both pre-SET and post-SET domains are required for methyltransferase activity. The SET domain also participates in stable binding to heterochromatin (By similarity).</text>
</comment>
<comment type="domain">
    <text evidence="1">In the pre-SET domain, Cys residues bind 3 zinc ions that are arranged in a triangular cluster; some of these Cys residues contribute to the binding of two zinc ions within the cluster.</text>
</comment>
<comment type="similarity">
    <text evidence="6">Belongs to the class V-like SAM-binding methyltransferase superfamily. Histone-lysine methyltransferase family. Suvar3-9 subfamily.</text>
</comment>
<accession>Q6DGD3</accession>
<accession>A5XBP4</accession>
<accession>B0S580</accession>